<comment type="function">
    <text evidence="1">Functions in the biosynthesis of branched-chain amino acids. Catalyzes the dehydration of (2R,3R)-2,3-dihydroxy-3-methylpentanoate (2,3-dihydroxy-3-methylvalerate) into 2-oxo-3-methylpentanoate (2-oxo-3-methylvalerate) and of (2R)-2,3-dihydroxy-3-methylbutanoate (2,3-dihydroxyisovalerate) into 2-oxo-3-methylbutanoate (2-oxoisovalerate), the penultimate precursor to L-isoleucine and L-valine, respectively.</text>
</comment>
<comment type="catalytic activity">
    <reaction evidence="1">
        <text>(2R)-2,3-dihydroxy-3-methylbutanoate = 3-methyl-2-oxobutanoate + H2O</text>
        <dbReference type="Rhea" id="RHEA:24809"/>
        <dbReference type="ChEBI" id="CHEBI:11851"/>
        <dbReference type="ChEBI" id="CHEBI:15377"/>
        <dbReference type="ChEBI" id="CHEBI:49072"/>
        <dbReference type="EC" id="4.2.1.9"/>
    </reaction>
    <physiologicalReaction direction="left-to-right" evidence="1">
        <dbReference type="Rhea" id="RHEA:24810"/>
    </physiologicalReaction>
</comment>
<comment type="catalytic activity">
    <reaction evidence="1">
        <text>(2R,3R)-2,3-dihydroxy-3-methylpentanoate = (S)-3-methyl-2-oxopentanoate + H2O</text>
        <dbReference type="Rhea" id="RHEA:27694"/>
        <dbReference type="ChEBI" id="CHEBI:15377"/>
        <dbReference type="ChEBI" id="CHEBI:35146"/>
        <dbReference type="ChEBI" id="CHEBI:49258"/>
        <dbReference type="EC" id="4.2.1.9"/>
    </reaction>
    <physiologicalReaction direction="left-to-right" evidence="1">
        <dbReference type="Rhea" id="RHEA:27695"/>
    </physiologicalReaction>
</comment>
<comment type="cofactor">
    <cofactor evidence="1">
        <name>[2Fe-2S] cluster</name>
        <dbReference type="ChEBI" id="CHEBI:190135"/>
    </cofactor>
    <text evidence="1">Binds 1 [2Fe-2S] cluster per subunit. This cluster acts as a Lewis acid cofactor.</text>
</comment>
<comment type="cofactor">
    <cofactor evidence="1">
        <name>Mg(2+)</name>
        <dbReference type="ChEBI" id="CHEBI:18420"/>
    </cofactor>
</comment>
<comment type="pathway">
    <text evidence="1">Amino-acid biosynthesis; L-isoleucine biosynthesis; L-isoleucine from 2-oxobutanoate: step 3/4.</text>
</comment>
<comment type="pathway">
    <text evidence="1">Amino-acid biosynthesis; L-valine biosynthesis; L-valine from pyruvate: step 3/4.</text>
</comment>
<comment type="subunit">
    <text evidence="1">Homodimer.</text>
</comment>
<comment type="similarity">
    <text evidence="1">Belongs to the IlvD/Edd family.</text>
</comment>
<accession>A5UY13</accession>
<evidence type="ECO:0000255" key="1">
    <source>
        <dbReference type="HAMAP-Rule" id="MF_00012"/>
    </source>
</evidence>
<reference key="1">
    <citation type="submission" date="2007-04" db="EMBL/GenBank/DDBJ databases">
        <title>Complete sequence of Roseiflexus sp. RS-1.</title>
        <authorList>
            <consortium name="US DOE Joint Genome Institute"/>
            <person name="Copeland A."/>
            <person name="Lucas S."/>
            <person name="Lapidus A."/>
            <person name="Barry K."/>
            <person name="Detter J.C."/>
            <person name="Glavina del Rio T."/>
            <person name="Hammon N."/>
            <person name="Israni S."/>
            <person name="Dalin E."/>
            <person name="Tice H."/>
            <person name="Pitluck S."/>
            <person name="Chertkov O."/>
            <person name="Brettin T."/>
            <person name="Bruce D."/>
            <person name="Han C."/>
            <person name="Schmutz J."/>
            <person name="Larimer F."/>
            <person name="Land M."/>
            <person name="Hauser L."/>
            <person name="Kyrpides N."/>
            <person name="Mikhailova N."/>
            <person name="Bryant D.A."/>
            <person name="Richardson P."/>
        </authorList>
    </citation>
    <scope>NUCLEOTIDE SEQUENCE [LARGE SCALE GENOMIC DNA]</scope>
    <source>
        <strain>RS-1</strain>
    </source>
</reference>
<name>ILVD_ROSS1</name>
<proteinExistence type="inferred from homology"/>
<keyword id="KW-0001">2Fe-2S</keyword>
<keyword id="KW-0028">Amino-acid biosynthesis</keyword>
<keyword id="KW-0100">Branched-chain amino acid biosynthesis</keyword>
<keyword id="KW-0408">Iron</keyword>
<keyword id="KW-0411">Iron-sulfur</keyword>
<keyword id="KW-0456">Lyase</keyword>
<keyword id="KW-0460">Magnesium</keyword>
<keyword id="KW-0479">Metal-binding</keyword>
<feature type="chain" id="PRO_0000321605" description="Dihydroxy-acid dehydratase">
    <location>
        <begin position="1"/>
        <end position="559"/>
    </location>
</feature>
<feature type="active site" description="Proton acceptor" evidence="1">
    <location>
        <position position="473"/>
    </location>
</feature>
<feature type="binding site" evidence="1">
    <location>
        <position position="52"/>
    </location>
    <ligand>
        <name>[2Fe-2S] cluster</name>
        <dbReference type="ChEBI" id="CHEBI:190135"/>
    </ligand>
</feature>
<feature type="binding site" evidence="1">
    <location>
        <position position="84"/>
    </location>
    <ligand>
        <name>Mg(2+)</name>
        <dbReference type="ChEBI" id="CHEBI:18420"/>
    </ligand>
</feature>
<feature type="binding site" evidence="1">
    <location>
        <position position="125"/>
    </location>
    <ligand>
        <name>[2Fe-2S] cluster</name>
        <dbReference type="ChEBI" id="CHEBI:190135"/>
    </ligand>
</feature>
<feature type="binding site" evidence="1">
    <location>
        <position position="126"/>
    </location>
    <ligand>
        <name>Mg(2+)</name>
        <dbReference type="ChEBI" id="CHEBI:18420"/>
    </ligand>
</feature>
<feature type="binding site" description="via carbamate group" evidence="1">
    <location>
        <position position="127"/>
    </location>
    <ligand>
        <name>Mg(2+)</name>
        <dbReference type="ChEBI" id="CHEBI:18420"/>
    </ligand>
</feature>
<feature type="binding site" evidence="1">
    <location>
        <position position="197"/>
    </location>
    <ligand>
        <name>[2Fe-2S] cluster</name>
        <dbReference type="ChEBI" id="CHEBI:190135"/>
    </ligand>
</feature>
<feature type="binding site" evidence="1">
    <location>
        <position position="447"/>
    </location>
    <ligand>
        <name>Mg(2+)</name>
        <dbReference type="ChEBI" id="CHEBI:18420"/>
    </ligand>
</feature>
<feature type="modified residue" description="N6-carboxylysine" evidence="1">
    <location>
        <position position="127"/>
    </location>
</feature>
<dbReference type="EC" id="4.2.1.9" evidence="1"/>
<dbReference type="EMBL" id="CP000686">
    <property type="protein sequence ID" value="ABQ91516.1"/>
    <property type="molecule type" value="Genomic_DNA"/>
</dbReference>
<dbReference type="RefSeq" id="WP_011957860.1">
    <property type="nucleotide sequence ID" value="NC_009523.1"/>
</dbReference>
<dbReference type="SMR" id="A5UY13"/>
<dbReference type="STRING" id="357808.RoseRS_3155"/>
<dbReference type="KEGG" id="rrs:RoseRS_3155"/>
<dbReference type="eggNOG" id="COG0129">
    <property type="taxonomic scope" value="Bacteria"/>
</dbReference>
<dbReference type="HOGENOM" id="CLU_014271_4_2_0"/>
<dbReference type="OrthoDB" id="9807077at2"/>
<dbReference type="UniPathway" id="UPA00047">
    <property type="reaction ID" value="UER00057"/>
</dbReference>
<dbReference type="UniPathway" id="UPA00049">
    <property type="reaction ID" value="UER00061"/>
</dbReference>
<dbReference type="Proteomes" id="UP000006554">
    <property type="component" value="Chromosome"/>
</dbReference>
<dbReference type="GO" id="GO:0051537">
    <property type="term" value="F:2 iron, 2 sulfur cluster binding"/>
    <property type="evidence" value="ECO:0007669"/>
    <property type="project" value="UniProtKB-UniRule"/>
</dbReference>
<dbReference type="GO" id="GO:0004160">
    <property type="term" value="F:dihydroxy-acid dehydratase activity"/>
    <property type="evidence" value="ECO:0007669"/>
    <property type="project" value="UniProtKB-UniRule"/>
</dbReference>
<dbReference type="GO" id="GO:0000287">
    <property type="term" value="F:magnesium ion binding"/>
    <property type="evidence" value="ECO:0007669"/>
    <property type="project" value="UniProtKB-UniRule"/>
</dbReference>
<dbReference type="GO" id="GO:0009097">
    <property type="term" value="P:isoleucine biosynthetic process"/>
    <property type="evidence" value="ECO:0007669"/>
    <property type="project" value="UniProtKB-UniRule"/>
</dbReference>
<dbReference type="GO" id="GO:0009099">
    <property type="term" value="P:L-valine biosynthetic process"/>
    <property type="evidence" value="ECO:0007669"/>
    <property type="project" value="UniProtKB-UniRule"/>
</dbReference>
<dbReference type="FunFam" id="3.50.30.80:FF:000001">
    <property type="entry name" value="Dihydroxy-acid dehydratase"/>
    <property type="match status" value="1"/>
</dbReference>
<dbReference type="Gene3D" id="3.50.30.80">
    <property type="entry name" value="IlvD/EDD C-terminal domain-like"/>
    <property type="match status" value="1"/>
</dbReference>
<dbReference type="HAMAP" id="MF_00012">
    <property type="entry name" value="IlvD"/>
    <property type="match status" value="1"/>
</dbReference>
<dbReference type="InterPro" id="IPR050165">
    <property type="entry name" value="DHAD_IlvD/Edd"/>
</dbReference>
<dbReference type="InterPro" id="IPR042096">
    <property type="entry name" value="Dihydro-acid_dehy_C"/>
</dbReference>
<dbReference type="InterPro" id="IPR004404">
    <property type="entry name" value="DihydroxyA_deHydtase"/>
</dbReference>
<dbReference type="InterPro" id="IPR020558">
    <property type="entry name" value="DiOHA_6PGluconate_deHydtase_CS"/>
</dbReference>
<dbReference type="InterPro" id="IPR056740">
    <property type="entry name" value="ILV_EDD_C"/>
</dbReference>
<dbReference type="InterPro" id="IPR000581">
    <property type="entry name" value="ILV_EDD_N"/>
</dbReference>
<dbReference type="InterPro" id="IPR037237">
    <property type="entry name" value="IlvD/EDD_N"/>
</dbReference>
<dbReference type="NCBIfam" id="TIGR00110">
    <property type="entry name" value="ilvD"/>
    <property type="match status" value="1"/>
</dbReference>
<dbReference type="NCBIfam" id="NF002068">
    <property type="entry name" value="PRK00911.1"/>
    <property type="match status" value="1"/>
</dbReference>
<dbReference type="PANTHER" id="PTHR21000">
    <property type="entry name" value="DIHYDROXY-ACID DEHYDRATASE DAD"/>
    <property type="match status" value="1"/>
</dbReference>
<dbReference type="PANTHER" id="PTHR21000:SF5">
    <property type="entry name" value="DIHYDROXY-ACID DEHYDRATASE, MITOCHONDRIAL"/>
    <property type="match status" value="1"/>
</dbReference>
<dbReference type="Pfam" id="PF24877">
    <property type="entry name" value="ILV_EDD_C"/>
    <property type="match status" value="1"/>
</dbReference>
<dbReference type="Pfam" id="PF00920">
    <property type="entry name" value="ILVD_EDD_N"/>
    <property type="match status" value="1"/>
</dbReference>
<dbReference type="SUPFAM" id="SSF143975">
    <property type="entry name" value="IlvD/EDD N-terminal domain-like"/>
    <property type="match status" value="1"/>
</dbReference>
<dbReference type="SUPFAM" id="SSF52016">
    <property type="entry name" value="LeuD/IlvD-like"/>
    <property type="match status" value="1"/>
</dbReference>
<dbReference type="PROSITE" id="PS00886">
    <property type="entry name" value="ILVD_EDD_1"/>
    <property type="match status" value="1"/>
</dbReference>
<dbReference type="PROSITE" id="PS00887">
    <property type="entry name" value="ILVD_EDD_2"/>
    <property type="match status" value="1"/>
</dbReference>
<sequence>MSSDLKRRSRTITDGRTRAGARAMLKAIGFTDEDLAKPIIGIANTWIETMPCNINLRALAARVKEGVRAAGGTPMEFNTVAIADGVTMGTEGMKASLISRDLIADSIELMGRGYMFDAIIALVACDKTIPGAAMGLTRLNIPGFLLYGGSIAPGHWRGKEITIQHVYEAIGAVAAGKMTDEELKEIEDAACPGPGACGGQYTANTMATVMEIIGLSPMGTAAVPAADPRKDSVGYRAGQLIMDVLRRDLKPRDILTRAAFENAIASVALTGGSTNAVLHLLALAREAGVPLTLDDFDAISRRTPLCCDLMPSGKYSAIHVDQAGGIQVIARRLVDGGFAHGDAITVTGRTLAEEAADAVETPGQDVIRPLDNPIKPTGGLLVLRGNLAPEGSVVKLFGYERTYHRGPARVFDGEEAAMAAIVGGEIRPDDIVIIRYEGPRGGPGMREMLGVTSAIVGAGLGQSVSLITDGRFSGATRGVMIGHVAPEAARGGPLAIVQEGDEIEINLDERRVDLLLSEEEIADRLLAWQPPAPRYEWGVMARYGALVSSASEGAVLVTP</sequence>
<organism>
    <name type="scientific">Roseiflexus sp. (strain RS-1)</name>
    <dbReference type="NCBI Taxonomy" id="357808"/>
    <lineage>
        <taxon>Bacteria</taxon>
        <taxon>Bacillati</taxon>
        <taxon>Chloroflexota</taxon>
        <taxon>Chloroflexia</taxon>
        <taxon>Chloroflexales</taxon>
        <taxon>Roseiflexineae</taxon>
        <taxon>Roseiflexaceae</taxon>
        <taxon>Roseiflexus</taxon>
    </lineage>
</organism>
<protein>
    <recommendedName>
        <fullName evidence="1">Dihydroxy-acid dehydratase</fullName>
        <shortName evidence="1">DAD</shortName>
        <ecNumber evidence="1">4.2.1.9</ecNumber>
    </recommendedName>
</protein>
<gene>
    <name evidence="1" type="primary">ilvD</name>
    <name type="ordered locus">RoseRS_3155</name>
</gene>